<accession>A4SME4</accession>
<comment type="function">
    <text evidence="1">Specifically methylates the guanine in position 2445 (m2G2445) and the guanine in position 2069 (m7G2069) of 23S rRNA.</text>
</comment>
<comment type="catalytic activity">
    <reaction evidence="1">
        <text>guanosine(2445) in 23S rRNA + S-adenosyl-L-methionine = N(2)-methylguanosine(2445) in 23S rRNA + S-adenosyl-L-homocysteine + H(+)</text>
        <dbReference type="Rhea" id="RHEA:42740"/>
        <dbReference type="Rhea" id="RHEA-COMP:10215"/>
        <dbReference type="Rhea" id="RHEA-COMP:10216"/>
        <dbReference type="ChEBI" id="CHEBI:15378"/>
        <dbReference type="ChEBI" id="CHEBI:57856"/>
        <dbReference type="ChEBI" id="CHEBI:59789"/>
        <dbReference type="ChEBI" id="CHEBI:74269"/>
        <dbReference type="ChEBI" id="CHEBI:74481"/>
        <dbReference type="EC" id="2.1.1.173"/>
    </reaction>
</comment>
<comment type="catalytic activity">
    <reaction evidence="1">
        <text>guanosine(2069) in 23S rRNA + S-adenosyl-L-methionine = N(2)-methylguanosine(2069) in 23S rRNA + S-adenosyl-L-homocysteine + H(+)</text>
        <dbReference type="Rhea" id="RHEA:43772"/>
        <dbReference type="Rhea" id="RHEA-COMP:10688"/>
        <dbReference type="Rhea" id="RHEA-COMP:10689"/>
        <dbReference type="ChEBI" id="CHEBI:15378"/>
        <dbReference type="ChEBI" id="CHEBI:57856"/>
        <dbReference type="ChEBI" id="CHEBI:59789"/>
        <dbReference type="ChEBI" id="CHEBI:74269"/>
        <dbReference type="ChEBI" id="CHEBI:74481"/>
        <dbReference type="EC" id="2.1.1.264"/>
    </reaction>
</comment>
<comment type="subcellular location">
    <subcellularLocation>
        <location evidence="1">Cytoplasm</location>
    </subcellularLocation>
</comment>
<comment type="similarity">
    <text evidence="1">Belongs to the methyltransferase superfamily. RlmKL family.</text>
</comment>
<reference key="1">
    <citation type="journal article" date="2008" name="BMC Genomics">
        <title>The genome of Aeromonas salmonicida subsp. salmonicida A449: insights into the evolution of a fish pathogen.</title>
        <authorList>
            <person name="Reith M.E."/>
            <person name="Singh R.K."/>
            <person name="Curtis B."/>
            <person name="Boyd J.M."/>
            <person name="Bouevitch A."/>
            <person name="Kimball J."/>
            <person name="Munholland J."/>
            <person name="Murphy C."/>
            <person name="Sarty D."/>
            <person name="Williams J."/>
            <person name="Nash J.H."/>
            <person name="Johnson S.C."/>
            <person name="Brown L.L."/>
        </authorList>
    </citation>
    <scope>NUCLEOTIDE SEQUENCE [LARGE SCALE GENOMIC DNA]</scope>
    <source>
        <strain>A449</strain>
    </source>
</reference>
<evidence type="ECO:0000255" key="1">
    <source>
        <dbReference type="HAMAP-Rule" id="MF_01858"/>
    </source>
</evidence>
<sequence length="719" mass="81227">MKEFFATCPKGLENLLADELTTLGAEQVRETVAGVHFKGELAIGYKACLWSRFASRIVLVLSEFQMNDDLDLYLGAHTIPWEEHFSGTSTIAVDFTGTNPAIRNTQYGALKIKDAIVDRFTKRGHVRPDVDKKAPDIRIMAHLGKGKANITLDLSGPALHQRFYRQGTGEAPLKENLACAMIARSGWAGEPMMDPMCGSGTLLIEAAFIAADMAPALRRERFGFDRWLQHDSELWQSLMMEAQVRAKRGMQRCEVKLFGCDADPRVLMKARDNAKAAGVAHLITFKQADVTQLENPLPMPAVVEGEVSQEEARQVGMLISNPPYGERLGEFPALLEVHQALGDALRRGFQGWRVSILSASPELLSCLRLRADKQYRLFNGALECQLRNYQIALDSVASQKEVAQDFANRLRKNLKTLEKWASKEGIDCYRLYDADLPEYNAAIDRYQDYLVVQEYAAPKDIPAQKTRQRLLDMVQAAIKVTGMDGEKVILKVRERQEGKQQYQKLAAEQHRMEVQEYGARLWVNLYDYLDTGLFLDHRQTRRMLGQMAKGKRFLNLFAYTGSATVHAGLGGASETTTVDMSHTYLNWAQDNMRLNSLVGRQHKFVQADCLKWLSEADDQYDLIFIDPPTFSNSKRMDESFDVQRDHLLLMQHLKRLLAADGTLVFSNNKRHFKMDLAGLEAAGLKAQNITSKTRPKDFERNQHIHNCWIITHAEAPAEA</sequence>
<name>RLMKL_AERS4</name>
<keyword id="KW-0963">Cytoplasm</keyword>
<keyword id="KW-0489">Methyltransferase</keyword>
<keyword id="KW-0694">RNA-binding</keyword>
<keyword id="KW-0698">rRNA processing</keyword>
<keyword id="KW-0949">S-adenosyl-L-methionine</keyword>
<keyword id="KW-0808">Transferase</keyword>
<protein>
    <recommendedName>
        <fullName evidence="1">Ribosomal RNA large subunit methyltransferase K/L</fullName>
    </recommendedName>
    <domain>
        <recommendedName>
            <fullName evidence="1">23S rRNA m2G2445 methyltransferase</fullName>
            <ecNumber evidence="1">2.1.1.173</ecNumber>
        </recommendedName>
        <alternativeName>
            <fullName evidence="1">rRNA (guanine-N(2)-)-methyltransferase RlmL</fullName>
        </alternativeName>
    </domain>
    <domain>
        <recommendedName>
            <fullName evidence="1">23S rRNA m7G2069 methyltransferase</fullName>
            <ecNumber evidence="1">2.1.1.264</ecNumber>
        </recommendedName>
        <alternativeName>
            <fullName evidence="1">rRNA (guanine-N(7)-)-methyltransferase RlmK</fullName>
        </alternativeName>
    </domain>
</protein>
<dbReference type="EC" id="2.1.1.173" evidence="1"/>
<dbReference type="EC" id="2.1.1.264" evidence="1"/>
<dbReference type="EMBL" id="CP000644">
    <property type="protein sequence ID" value="ABO90066.1"/>
    <property type="molecule type" value="Genomic_DNA"/>
</dbReference>
<dbReference type="SMR" id="A4SME4"/>
<dbReference type="STRING" id="29491.GCA_000820065_03865"/>
<dbReference type="KEGG" id="asa:ASA_1995"/>
<dbReference type="eggNOG" id="COG0116">
    <property type="taxonomic scope" value="Bacteria"/>
</dbReference>
<dbReference type="eggNOG" id="COG1092">
    <property type="taxonomic scope" value="Bacteria"/>
</dbReference>
<dbReference type="HOGENOM" id="CLU_014042_2_0_6"/>
<dbReference type="Proteomes" id="UP000000225">
    <property type="component" value="Chromosome"/>
</dbReference>
<dbReference type="GO" id="GO:0005737">
    <property type="term" value="C:cytoplasm"/>
    <property type="evidence" value="ECO:0007669"/>
    <property type="project" value="UniProtKB-SubCell"/>
</dbReference>
<dbReference type="GO" id="GO:0052915">
    <property type="term" value="F:23S rRNA (guanine(2445)-N(2))-methyltransferase activity"/>
    <property type="evidence" value="ECO:0007669"/>
    <property type="project" value="UniProtKB-UniRule"/>
</dbReference>
<dbReference type="GO" id="GO:0003723">
    <property type="term" value="F:RNA binding"/>
    <property type="evidence" value="ECO:0007669"/>
    <property type="project" value="UniProtKB-KW"/>
</dbReference>
<dbReference type="GO" id="GO:0070043">
    <property type="term" value="F:rRNA (guanine-N7-)-methyltransferase activity"/>
    <property type="evidence" value="ECO:0007669"/>
    <property type="project" value="UniProtKB-UniRule"/>
</dbReference>
<dbReference type="CDD" id="cd02440">
    <property type="entry name" value="AdoMet_MTases"/>
    <property type="match status" value="1"/>
</dbReference>
<dbReference type="CDD" id="cd11715">
    <property type="entry name" value="THUMP_AdoMetMT"/>
    <property type="match status" value="1"/>
</dbReference>
<dbReference type="FunFam" id="3.30.750.80:FF:000001">
    <property type="entry name" value="Ribosomal RNA large subunit methyltransferase K/L"/>
    <property type="match status" value="1"/>
</dbReference>
<dbReference type="FunFam" id="3.40.50.150:FF:000039">
    <property type="entry name" value="Ribosomal RNA large subunit methyltransferase K/L"/>
    <property type="match status" value="1"/>
</dbReference>
<dbReference type="Gene3D" id="3.30.2130.30">
    <property type="match status" value="1"/>
</dbReference>
<dbReference type="Gene3D" id="3.30.750.80">
    <property type="entry name" value="RNA methyltransferase domain (HRMD) like"/>
    <property type="match status" value="1"/>
</dbReference>
<dbReference type="Gene3D" id="3.40.50.150">
    <property type="entry name" value="Vaccinia Virus protein VP39"/>
    <property type="match status" value="2"/>
</dbReference>
<dbReference type="HAMAP" id="MF_01858">
    <property type="entry name" value="23SrRNA_methyltr_KL"/>
    <property type="match status" value="1"/>
</dbReference>
<dbReference type="InterPro" id="IPR017244">
    <property type="entry name" value="23SrRNA_methyltr_KL"/>
</dbReference>
<dbReference type="InterPro" id="IPR002052">
    <property type="entry name" value="DNA_methylase_N6_adenine_CS"/>
</dbReference>
<dbReference type="InterPro" id="IPR000241">
    <property type="entry name" value="RlmKL-like_Mtase"/>
</dbReference>
<dbReference type="InterPro" id="IPR053943">
    <property type="entry name" value="RlmKL-like_Mtase_CS"/>
</dbReference>
<dbReference type="InterPro" id="IPR054170">
    <property type="entry name" value="RlmL_1st"/>
</dbReference>
<dbReference type="InterPro" id="IPR019614">
    <property type="entry name" value="SAM-dep_methyl-trfase"/>
</dbReference>
<dbReference type="InterPro" id="IPR029063">
    <property type="entry name" value="SAM-dependent_MTases_sf"/>
</dbReference>
<dbReference type="InterPro" id="IPR004114">
    <property type="entry name" value="THUMP_dom"/>
</dbReference>
<dbReference type="NCBIfam" id="NF008748">
    <property type="entry name" value="PRK11783.1"/>
    <property type="match status" value="1"/>
</dbReference>
<dbReference type="PANTHER" id="PTHR47313">
    <property type="entry name" value="RIBOSOMAL RNA LARGE SUBUNIT METHYLTRANSFERASE K/L"/>
    <property type="match status" value="1"/>
</dbReference>
<dbReference type="PANTHER" id="PTHR47313:SF1">
    <property type="entry name" value="RIBOSOMAL RNA LARGE SUBUNIT METHYLTRANSFERASE K_L"/>
    <property type="match status" value="1"/>
</dbReference>
<dbReference type="Pfam" id="PF10672">
    <property type="entry name" value="Methyltrans_SAM"/>
    <property type="match status" value="1"/>
</dbReference>
<dbReference type="Pfam" id="PF22020">
    <property type="entry name" value="RlmL_1st"/>
    <property type="match status" value="1"/>
</dbReference>
<dbReference type="Pfam" id="PF02926">
    <property type="entry name" value="THUMP"/>
    <property type="match status" value="1"/>
</dbReference>
<dbReference type="Pfam" id="PF01170">
    <property type="entry name" value="UPF0020"/>
    <property type="match status" value="1"/>
</dbReference>
<dbReference type="PIRSF" id="PIRSF037618">
    <property type="entry name" value="RNA_Mtase_bacteria_prd"/>
    <property type="match status" value="1"/>
</dbReference>
<dbReference type="SMART" id="SM00981">
    <property type="entry name" value="THUMP"/>
    <property type="match status" value="1"/>
</dbReference>
<dbReference type="SUPFAM" id="SSF53335">
    <property type="entry name" value="S-adenosyl-L-methionine-dependent methyltransferases"/>
    <property type="match status" value="2"/>
</dbReference>
<dbReference type="PROSITE" id="PS51165">
    <property type="entry name" value="THUMP"/>
    <property type="match status" value="1"/>
</dbReference>
<dbReference type="PROSITE" id="PS01261">
    <property type="entry name" value="UPF0020"/>
    <property type="match status" value="1"/>
</dbReference>
<gene>
    <name evidence="1" type="primary">rlmL</name>
    <name type="ordered locus">ASA_1995</name>
</gene>
<organism>
    <name type="scientific">Aeromonas salmonicida (strain A449)</name>
    <dbReference type="NCBI Taxonomy" id="382245"/>
    <lineage>
        <taxon>Bacteria</taxon>
        <taxon>Pseudomonadati</taxon>
        <taxon>Pseudomonadota</taxon>
        <taxon>Gammaproteobacteria</taxon>
        <taxon>Aeromonadales</taxon>
        <taxon>Aeromonadaceae</taxon>
        <taxon>Aeromonas</taxon>
    </lineage>
</organism>
<feature type="chain" id="PRO_0000366723" description="Ribosomal RNA large subunit methyltransferase K/L">
    <location>
        <begin position="1"/>
        <end position="719"/>
    </location>
</feature>
<feature type="domain" description="THUMP" evidence="1">
    <location>
        <begin position="43"/>
        <end position="154"/>
    </location>
</feature>
<proteinExistence type="inferred from homology"/>